<gene>
    <name type="primary">LAS21</name>
    <name type="synonym">GPI7</name>
    <name type="ordered locus">YALI0D26235g</name>
</gene>
<protein>
    <recommendedName>
        <fullName>GPI ethanolamine phosphate transferase 2</fullName>
        <ecNumber>2.-.-.-</ecNumber>
    </recommendedName>
    <alternativeName>
        <fullName>Glycosylphosphatidylinositol-anchor biosynthesis protein 7</fullName>
    </alternativeName>
</protein>
<proteinExistence type="inferred from homology"/>
<comment type="function">
    <text evidence="1">Ethanolamine phosphate transferase involved in glycosylphosphatidylinositol-anchor biosynthesis. Transfers ethanolamine phosphate to the GPI second mannose (By similarity).</text>
</comment>
<comment type="pathway">
    <text>Glycolipid biosynthesis; glycosylphosphatidylinositol-anchor biosynthesis.</text>
</comment>
<comment type="subcellular location">
    <subcellularLocation>
        <location evidence="1">Endoplasmic reticulum membrane</location>
        <topology evidence="1">Multi-pass membrane protein</topology>
    </subcellularLocation>
</comment>
<comment type="disruption phenotype">
    <text evidence="3">Defects in hyphal formation.</text>
</comment>
<comment type="similarity">
    <text evidence="4">Belongs to the PIGG/PIGN/PIGO family. PIGG subfamily.</text>
</comment>
<dbReference type="EC" id="2.-.-.-"/>
<dbReference type="EMBL" id="AF321466">
    <property type="protein sequence ID" value="AAK52677.1"/>
    <property type="molecule type" value="Genomic_DNA"/>
</dbReference>
<dbReference type="EMBL" id="CR382130">
    <property type="protein sequence ID" value="CAG81512.1"/>
    <property type="molecule type" value="Genomic_DNA"/>
</dbReference>
<dbReference type="RefSeq" id="XP_503306.1">
    <property type="nucleotide sequence ID" value="XM_503306.1"/>
</dbReference>
<dbReference type="SMR" id="Q6C7Q6"/>
<dbReference type="FunCoup" id="Q6C7Q6">
    <property type="interactions" value="478"/>
</dbReference>
<dbReference type="STRING" id="284591.Q6C7Q6"/>
<dbReference type="GlyCosmos" id="Q6C7Q6">
    <property type="glycosylation" value="3 sites, No reported glycans"/>
</dbReference>
<dbReference type="EnsemblFungi" id="CAG81512">
    <property type="protein sequence ID" value="CAG81512"/>
    <property type="gene ID" value="YALI0_D26235g"/>
</dbReference>
<dbReference type="KEGG" id="yli:2911071"/>
<dbReference type="VEuPathDB" id="FungiDB:YALI0_D26235g"/>
<dbReference type="HOGENOM" id="CLU_004770_0_0_1"/>
<dbReference type="InParanoid" id="Q6C7Q6"/>
<dbReference type="OMA" id="SWNQTGQ"/>
<dbReference type="OrthoDB" id="111010at4891"/>
<dbReference type="UniPathway" id="UPA00196"/>
<dbReference type="Proteomes" id="UP000001300">
    <property type="component" value="Chromosome D"/>
</dbReference>
<dbReference type="GO" id="GO:0005789">
    <property type="term" value="C:endoplasmic reticulum membrane"/>
    <property type="evidence" value="ECO:0000318"/>
    <property type="project" value="GO_Central"/>
</dbReference>
<dbReference type="GO" id="GO:0005886">
    <property type="term" value="C:plasma membrane"/>
    <property type="evidence" value="ECO:0007669"/>
    <property type="project" value="EnsemblFungi"/>
</dbReference>
<dbReference type="GO" id="GO:0051267">
    <property type="term" value="F:CP2 mannose-ethanolamine phosphotransferase activity"/>
    <property type="evidence" value="ECO:0000318"/>
    <property type="project" value="GO_Central"/>
</dbReference>
<dbReference type="GO" id="GO:0006506">
    <property type="term" value="P:GPI anchor biosynthetic process"/>
    <property type="evidence" value="ECO:0000318"/>
    <property type="project" value="GO_Central"/>
</dbReference>
<dbReference type="CDD" id="cd16024">
    <property type="entry name" value="GPI_EPT_2"/>
    <property type="match status" value="1"/>
</dbReference>
<dbReference type="FunFam" id="3.40.720.10:FF:000045">
    <property type="entry name" value="GPI ethanolamine phosphate transferase 2"/>
    <property type="match status" value="1"/>
</dbReference>
<dbReference type="Gene3D" id="3.40.720.10">
    <property type="entry name" value="Alkaline Phosphatase, subunit A"/>
    <property type="match status" value="1"/>
</dbReference>
<dbReference type="InterPro" id="IPR017850">
    <property type="entry name" value="Alkaline_phosphatase_core_sf"/>
</dbReference>
<dbReference type="InterPro" id="IPR002591">
    <property type="entry name" value="Phosphodiest/P_Trfase"/>
</dbReference>
<dbReference type="InterPro" id="IPR037674">
    <property type="entry name" value="PIG-G_N"/>
</dbReference>
<dbReference type="InterPro" id="IPR039527">
    <property type="entry name" value="PIGG/GPI7"/>
</dbReference>
<dbReference type="InterPro" id="IPR045687">
    <property type="entry name" value="PIGG/GPI7_C"/>
</dbReference>
<dbReference type="PANTHER" id="PTHR23072:SF0">
    <property type="entry name" value="GPI ETHANOLAMINE PHOSPHATE TRANSFERASE 2"/>
    <property type="match status" value="1"/>
</dbReference>
<dbReference type="PANTHER" id="PTHR23072">
    <property type="entry name" value="PHOSPHATIDYLINOSITOL GLYCAN-RELATED"/>
    <property type="match status" value="1"/>
</dbReference>
<dbReference type="Pfam" id="PF01663">
    <property type="entry name" value="Phosphodiest"/>
    <property type="match status" value="1"/>
</dbReference>
<dbReference type="Pfam" id="PF19316">
    <property type="entry name" value="PIGO_PIGG"/>
    <property type="match status" value="1"/>
</dbReference>
<dbReference type="SUPFAM" id="SSF53649">
    <property type="entry name" value="Alkaline phosphatase-like"/>
    <property type="match status" value="1"/>
</dbReference>
<organism>
    <name type="scientific">Yarrowia lipolytica (strain CLIB 122 / E 150)</name>
    <name type="common">Yeast</name>
    <name type="synonym">Candida lipolytica</name>
    <dbReference type="NCBI Taxonomy" id="284591"/>
    <lineage>
        <taxon>Eukaryota</taxon>
        <taxon>Fungi</taxon>
        <taxon>Dikarya</taxon>
        <taxon>Ascomycota</taxon>
        <taxon>Saccharomycotina</taxon>
        <taxon>Dipodascomycetes</taxon>
        <taxon>Dipodascales</taxon>
        <taxon>Dipodascales incertae sedis</taxon>
        <taxon>Yarrowia</taxon>
    </lineage>
</organism>
<sequence>MLWKRWTLAVTIVVLQLAAVLLFARGFLPSRVLLPGYTESRVSTEAPFQKAIIMVVDAFRSDFAFSDQSNCPQLHKRINSGGAIPFTAHSTPPTVTLPRIKGLTTGSTPNFLDAVLNIAESDNSSTLANQDSWLAQASRDGRKIHMFGDDTWIKLFPGMFDDCEGTASFFVSDYTEVDNNVTRHIDTQLDQKTEWDVLILHYLGLDHIGHKTGPESPFMPAKQKEMDDIFDKLYNSCDDDTVLILLGDHGMNEVGNHGGSSAGETSAAMVFASPKFETAQLTETAETSPLPWTDTYKYHSRMDQTDLVPTLTALLGLNTPKNNLGVLVSQMLGLWSPEDQLNVLKNNADQMVQILQGQASRESDAKEVYELYDTLNSNPSVKDYYNFLYEAQSYLTHASSNYNTNDMLGGIGLGLLSTILALTVFSALTLAVQGLKRLYLIILLVYFISVFGSSTVEEEHQIWYWITSGWMAFLYISGSRNKFGDGFNWMFVQVFVRMMISWNQTGQKFTKKDDIVTWLSKDGNHPVLWILILVTYGVAFNKVWRYGFSKVESKLAFLLTLITTFASVGFKITQAWEAGEVVPAPLLYLMGLPGTLNEVNARMAGLARFAFSTIAAGSLYRVLSLAGTDKVNLIRDLHAFLTLFLITQSRIQNIPLFMVYYFLEIFLRKATNRSFIFSSRDIYQTEALFQKLVLVLSVSTLLLEQVSFFSMGNSNSMASIDLSNAYNGVTLYQIEFVGVLTFVSNWIGPLYWSTAGLSFLLEDHVRNAIFAKIAEKNNDVKLTTKLVQQALTLRVYVVLAFSSVAISAVMITCFFLREHLFIWTVFSPKLLYQFVWTVLQFALVDVILSSIFVVLVYRSV</sequence>
<name>GPI7_YARLI</name>
<evidence type="ECO:0000250" key="1"/>
<evidence type="ECO:0000255" key="2"/>
<evidence type="ECO:0000269" key="3">
    <source>
    </source>
</evidence>
<evidence type="ECO:0000305" key="4"/>
<accession>Q6C7Q6</accession>
<accession>Q96X26</accession>
<feature type="chain" id="PRO_0000246197" description="GPI ethanolamine phosphate transferase 2">
    <location>
        <begin position="1"/>
        <end position="860"/>
    </location>
</feature>
<feature type="transmembrane region" description="Helical" evidence="2">
    <location>
        <begin position="408"/>
        <end position="428"/>
    </location>
</feature>
<feature type="transmembrane region" description="Helical" evidence="2">
    <location>
        <begin position="438"/>
        <end position="458"/>
    </location>
</feature>
<feature type="transmembrane region" description="Helical" evidence="2">
    <location>
        <begin position="459"/>
        <end position="479"/>
    </location>
</feature>
<feature type="transmembrane region" description="Helical" evidence="2">
    <location>
        <begin position="487"/>
        <end position="506"/>
    </location>
</feature>
<feature type="transmembrane region" description="Helical" evidence="2">
    <location>
        <begin position="524"/>
        <end position="544"/>
    </location>
</feature>
<feature type="transmembrane region" description="Helical" evidence="2">
    <location>
        <begin position="555"/>
        <end position="575"/>
    </location>
</feature>
<feature type="transmembrane region" description="Helical" evidence="2">
    <location>
        <begin position="576"/>
        <end position="596"/>
    </location>
</feature>
<feature type="transmembrane region" description="Helical" evidence="2">
    <location>
        <begin position="639"/>
        <end position="659"/>
    </location>
</feature>
<feature type="transmembrane region" description="Helical" evidence="2">
    <location>
        <begin position="692"/>
        <end position="712"/>
    </location>
</feature>
<feature type="transmembrane region" description="Helical" evidence="2">
    <location>
        <begin position="736"/>
        <end position="756"/>
    </location>
</feature>
<feature type="transmembrane region" description="Helical" evidence="2">
    <location>
        <begin position="795"/>
        <end position="815"/>
    </location>
</feature>
<feature type="transmembrane region" description="Helical" evidence="2">
    <location>
        <begin position="834"/>
        <end position="854"/>
    </location>
</feature>
<feature type="glycosylation site" description="N-linked (GlcNAc...) asparagine" evidence="2">
    <location>
        <position position="123"/>
    </location>
</feature>
<feature type="glycosylation site" description="N-linked (GlcNAc...) asparagine" evidence="2">
    <location>
        <position position="180"/>
    </location>
</feature>
<feature type="glycosylation site" description="N-linked (GlcNAc...) asparagine" evidence="2">
    <location>
        <position position="672"/>
    </location>
</feature>
<feature type="sequence conflict" description="In Ref. 1; AAK52677." evidence="4" ref="1">
    <original>HPV</original>
    <variation>QPS</variation>
    <location>
        <begin position="525"/>
        <end position="527"/>
    </location>
</feature>
<keyword id="KW-0256">Endoplasmic reticulum</keyword>
<keyword id="KW-0325">Glycoprotein</keyword>
<keyword id="KW-0337">GPI-anchor biosynthesis</keyword>
<keyword id="KW-0472">Membrane</keyword>
<keyword id="KW-1185">Reference proteome</keyword>
<keyword id="KW-0808">Transferase</keyword>
<keyword id="KW-0812">Transmembrane</keyword>
<keyword id="KW-1133">Transmembrane helix</keyword>
<reference key="1">
    <citation type="journal article" date="2001" name="J. Bacteriol.">
        <title>Tagging morphogenetic genes by insertional mutagenesis in the yeast Yarrowia lipolytica.</title>
        <authorList>
            <person name="Richard M."/>
            <person name="Quijano R.R."/>
            <person name="Bezzate S."/>
            <person name="Bordon-Pallier F."/>
            <person name="Gaillardin C."/>
        </authorList>
    </citation>
    <scope>NUCLEOTIDE SEQUENCE [GENOMIC DNA]</scope>
    <scope>DISRUPTION PHENOTYPE</scope>
    <source>
        <strain>ATCC 20460 / W29</strain>
    </source>
</reference>
<reference key="2">
    <citation type="journal article" date="2004" name="Nature">
        <title>Genome evolution in yeasts.</title>
        <authorList>
            <person name="Dujon B."/>
            <person name="Sherman D."/>
            <person name="Fischer G."/>
            <person name="Durrens P."/>
            <person name="Casaregola S."/>
            <person name="Lafontaine I."/>
            <person name="de Montigny J."/>
            <person name="Marck C."/>
            <person name="Neuveglise C."/>
            <person name="Talla E."/>
            <person name="Goffard N."/>
            <person name="Frangeul L."/>
            <person name="Aigle M."/>
            <person name="Anthouard V."/>
            <person name="Babour A."/>
            <person name="Barbe V."/>
            <person name="Barnay S."/>
            <person name="Blanchin S."/>
            <person name="Beckerich J.-M."/>
            <person name="Beyne E."/>
            <person name="Bleykasten C."/>
            <person name="Boisrame A."/>
            <person name="Boyer J."/>
            <person name="Cattolico L."/>
            <person name="Confanioleri F."/>
            <person name="de Daruvar A."/>
            <person name="Despons L."/>
            <person name="Fabre E."/>
            <person name="Fairhead C."/>
            <person name="Ferry-Dumazet H."/>
            <person name="Groppi A."/>
            <person name="Hantraye F."/>
            <person name="Hennequin C."/>
            <person name="Jauniaux N."/>
            <person name="Joyet P."/>
            <person name="Kachouri R."/>
            <person name="Kerrest A."/>
            <person name="Koszul R."/>
            <person name="Lemaire M."/>
            <person name="Lesur I."/>
            <person name="Ma L."/>
            <person name="Muller H."/>
            <person name="Nicaud J.-M."/>
            <person name="Nikolski M."/>
            <person name="Oztas S."/>
            <person name="Ozier-Kalogeropoulos O."/>
            <person name="Pellenz S."/>
            <person name="Potier S."/>
            <person name="Richard G.-F."/>
            <person name="Straub M.-L."/>
            <person name="Suleau A."/>
            <person name="Swennen D."/>
            <person name="Tekaia F."/>
            <person name="Wesolowski-Louvel M."/>
            <person name="Westhof E."/>
            <person name="Wirth B."/>
            <person name="Zeniou-Meyer M."/>
            <person name="Zivanovic Y."/>
            <person name="Bolotin-Fukuhara M."/>
            <person name="Thierry A."/>
            <person name="Bouchier C."/>
            <person name="Caudron B."/>
            <person name="Scarpelli C."/>
            <person name="Gaillardin C."/>
            <person name="Weissenbach J."/>
            <person name="Wincker P."/>
            <person name="Souciet J.-L."/>
        </authorList>
    </citation>
    <scope>NUCLEOTIDE SEQUENCE [LARGE SCALE GENOMIC DNA]</scope>
    <source>
        <strain>CLIB 122 / E 150</strain>
    </source>
</reference>